<reference key="1">
    <citation type="journal article" date="1992" name="J. Mol. Biol.">
        <title>Gene organization deduced from the complete sequence of liverwort Marchantia polymorpha mitochondrial DNA. A primitive form of plant mitochondrial genome.</title>
        <authorList>
            <person name="Oda K."/>
            <person name="Yamato K."/>
            <person name="Ohta E."/>
            <person name="Nakamura Y."/>
            <person name="Takemura M."/>
            <person name="Nozato N."/>
            <person name="Akashi K."/>
            <person name="Kanegae T."/>
            <person name="Ogura Y."/>
            <person name="Kohchi T."/>
            <person name="Ohyama K."/>
        </authorList>
    </citation>
    <scope>NUCLEOTIDE SEQUENCE [GENOMIC DNA]</scope>
</reference>
<reference key="2">
    <citation type="journal article" date="1992" name="Nucleic Acids Res.">
        <title>Gene clusters for ribosomal proteins in the mitochondrial genome of a liverwort, Marchantia polymorpha.</title>
        <authorList>
            <person name="Takemura M."/>
            <person name="Oda K."/>
            <person name="Yamato K."/>
            <person name="Ohta E."/>
            <person name="Nakamura Y."/>
            <person name="Nozato N."/>
            <person name="Akashi K."/>
            <person name="Ohyama K."/>
        </authorList>
    </citation>
    <scope>NUCLEOTIDE SEQUENCE [GENOMIC DNA]</scope>
</reference>
<proteinExistence type="inferred from homology"/>
<organism>
    <name type="scientific">Marchantia polymorpha</name>
    <name type="common">Common liverwort</name>
    <name type="synonym">Marchantia aquatica</name>
    <dbReference type="NCBI Taxonomy" id="3197"/>
    <lineage>
        <taxon>Eukaryota</taxon>
        <taxon>Viridiplantae</taxon>
        <taxon>Streptophyta</taxon>
        <taxon>Embryophyta</taxon>
        <taxon>Marchantiophyta</taxon>
        <taxon>Marchantiopsida</taxon>
        <taxon>Marchantiidae</taxon>
        <taxon>Marchantiales</taxon>
        <taxon>Marchantiaceae</taxon>
        <taxon>Marchantia</taxon>
    </lineage>
</organism>
<protein>
    <recommendedName>
        <fullName evidence="1">Small ribosomal subunit protein uS8m</fullName>
    </recommendedName>
    <alternativeName>
        <fullName>Ribosomal protein S8, mitochondrial</fullName>
    </alternativeName>
</protein>
<name>RT08_MARPO</name>
<dbReference type="EMBL" id="M68929">
    <property type="protein sequence ID" value="AAC09421.1"/>
    <property type="molecule type" value="Genomic_DNA"/>
</dbReference>
<dbReference type="PIR" id="S25980">
    <property type="entry name" value="S25980"/>
</dbReference>
<dbReference type="RefSeq" id="NP_054424.1">
    <property type="nucleotide sequence ID" value="NC_001660.1"/>
</dbReference>
<dbReference type="SMR" id="P26868"/>
<dbReference type="GeneID" id="2702473"/>
<dbReference type="GO" id="GO:0005739">
    <property type="term" value="C:mitochondrion"/>
    <property type="evidence" value="ECO:0007669"/>
    <property type="project" value="UniProtKB-SubCell"/>
</dbReference>
<dbReference type="GO" id="GO:1990904">
    <property type="term" value="C:ribonucleoprotein complex"/>
    <property type="evidence" value="ECO:0007669"/>
    <property type="project" value="UniProtKB-KW"/>
</dbReference>
<dbReference type="GO" id="GO:0005840">
    <property type="term" value="C:ribosome"/>
    <property type="evidence" value="ECO:0007669"/>
    <property type="project" value="UniProtKB-KW"/>
</dbReference>
<dbReference type="GO" id="GO:0003735">
    <property type="term" value="F:structural constituent of ribosome"/>
    <property type="evidence" value="ECO:0007669"/>
    <property type="project" value="InterPro"/>
</dbReference>
<dbReference type="GO" id="GO:0006412">
    <property type="term" value="P:translation"/>
    <property type="evidence" value="ECO:0007669"/>
    <property type="project" value="InterPro"/>
</dbReference>
<dbReference type="FunFam" id="3.30.1490.10:FF:000001">
    <property type="entry name" value="30S ribosomal protein S8"/>
    <property type="match status" value="1"/>
</dbReference>
<dbReference type="Gene3D" id="3.30.1370.30">
    <property type="match status" value="1"/>
</dbReference>
<dbReference type="Gene3D" id="3.30.1490.10">
    <property type="match status" value="1"/>
</dbReference>
<dbReference type="InterPro" id="IPR000630">
    <property type="entry name" value="Ribosomal_uS8"/>
</dbReference>
<dbReference type="InterPro" id="IPR035987">
    <property type="entry name" value="Ribosomal_uS8_sf"/>
</dbReference>
<dbReference type="PANTHER" id="PTHR11758">
    <property type="entry name" value="40S RIBOSOMAL PROTEIN S15A"/>
    <property type="match status" value="1"/>
</dbReference>
<dbReference type="Pfam" id="PF00410">
    <property type="entry name" value="Ribosomal_S8"/>
    <property type="match status" value="1"/>
</dbReference>
<dbReference type="SUPFAM" id="SSF56047">
    <property type="entry name" value="Ribosomal protein S8"/>
    <property type="match status" value="1"/>
</dbReference>
<feature type="chain" id="PRO_0000126600" description="Small ribosomal subunit protein uS8m">
    <location>
        <begin position="1"/>
        <end position="152"/>
    </location>
</feature>
<evidence type="ECO:0000305" key="1"/>
<gene>
    <name type="primary">RPS8</name>
</gene>
<geneLocation type="mitochondrion"/>
<comment type="subcellular location">
    <subcellularLocation>
        <location>Mitochondrion</location>
    </subcellularLocation>
</comment>
<comment type="similarity">
    <text evidence="1">Belongs to the universal ribosomal protein uS8 family.</text>
</comment>
<keyword id="KW-0496">Mitochondrion</keyword>
<keyword id="KW-0687">Ribonucleoprotein</keyword>
<keyword id="KW-0689">Ribosomal protein</keyword>
<sequence length="152" mass="17312">MHTLSNLLSSIKNAQKAQKRVLYFSSFKKISKRKKRFVCSACKMMPRVFVSRLCWDFCRILYNEGYIHGFSQEADGSLRIVLKYHSSGIGVIKKMKTISKPGFRIYSSKNRLSKKREGLGITILSTSKGNLICDREAQKTNFGGGEILCQVF</sequence>
<accession>P26868</accession>